<proteinExistence type="inferred from homology"/>
<protein>
    <recommendedName>
        <fullName evidence="1">DNA replication and repair protein RecF</fullName>
    </recommendedName>
</protein>
<feature type="chain" id="PRO_0000196431" description="DNA replication and repair protein RecF">
    <location>
        <begin position="1"/>
        <end position="385"/>
    </location>
</feature>
<feature type="binding site" evidence="1">
    <location>
        <begin position="30"/>
        <end position="37"/>
    </location>
    <ligand>
        <name>ATP</name>
        <dbReference type="ChEBI" id="CHEBI:30616"/>
    </ligand>
</feature>
<sequence length="385" mass="42186">MYVRHLGLRDFRSWACVDLELHPGRTVFVGPNGYGKTNLIEALWYSTTLGSHRVSADLPLIRVGTDRAVISTIVVNDGRECAVDLEIATGRVNKARLNRSSVRSTRDVVGVLRAVLFAPEDLGLVRGDPADRRRYLDDLAIVRRPAIAAVRAEYERVVRQRTALLKSVPGARYRGDRGVFDTLEVWDSRLAEHGAELVAARIDLVNQLAPEVKKAYQLLAPESRSASIGYRASMDVTGPSEQSDTDRQLLAARLLAALAARRDAELERGVCLVGPHRDDLILRLGDQPAKGFASHGEAWSLAVALRLAAYQLLRVDGGEPVLLLDDVFAELDVMRRRALATAAESAEQVLVTAAVLEDIPAGWDARRVHIDVRADDTGSMSVVLP</sequence>
<comment type="function">
    <text evidence="1">The RecF protein is involved in DNA metabolism; it is required for DNA replication and normal SOS inducibility. RecF binds preferentially to single-stranded, linear DNA. It also seems to bind ATP.</text>
</comment>
<comment type="subcellular location">
    <subcellularLocation>
        <location evidence="1">Cytoplasm</location>
    </subcellularLocation>
</comment>
<comment type="similarity">
    <text evidence="1">Belongs to the RecF family.</text>
</comment>
<dbReference type="EMBL" id="LT708304">
    <property type="protein sequence ID" value="SIT98339.1"/>
    <property type="molecule type" value="Genomic_DNA"/>
</dbReference>
<dbReference type="RefSeq" id="NP_853673.1">
    <property type="nucleotide sequence ID" value="NC_002945.3"/>
</dbReference>
<dbReference type="RefSeq" id="WP_003400273.1">
    <property type="nucleotide sequence ID" value="NC_002945.4"/>
</dbReference>
<dbReference type="SMR" id="Q7U314"/>
<dbReference type="KEGG" id="mbo:BQ2027_MB0003"/>
<dbReference type="PATRIC" id="fig|233413.5.peg.3"/>
<dbReference type="Proteomes" id="UP000001419">
    <property type="component" value="Chromosome"/>
</dbReference>
<dbReference type="GO" id="GO:0005737">
    <property type="term" value="C:cytoplasm"/>
    <property type="evidence" value="ECO:0007669"/>
    <property type="project" value="UniProtKB-SubCell"/>
</dbReference>
<dbReference type="GO" id="GO:0005524">
    <property type="term" value="F:ATP binding"/>
    <property type="evidence" value="ECO:0007669"/>
    <property type="project" value="UniProtKB-UniRule"/>
</dbReference>
<dbReference type="GO" id="GO:0003697">
    <property type="term" value="F:single-stranded DNA binding"/>
    <property type="evidence" value="ECO:0007669"/>
    <property type="project" value="UniProtKB-UniRule"/>
</dbReference>
<dbReference type="GO" id="GO:0006260">
    <property type="term" value="P:DNA replication"/>
    <property type="evidence" value="ECO:0007669"/>
    <property type="project" value="UniProtKB-UniRule"/>
</dbReference>
<dbReference type="GO" id="GO:0000731">
    <property type="term" value="P:DNA synthesis involved in DNA repair"/>
    <property type="evidence" value="ECO:0007669"/>
    <property type="project" value="TreeGrafter"/>
</dbReference>
<dbReference type="GO" id="GO:0006302">
    <property type="term" value="P:double-strand break repair"/>
    <property type="evidence" value="ECO:0007669"/>
    <property type="project" value="TreeGrafter"/>
</dbReference>
<dbReference type="GO" id="GO:0009432">
    <property type="term" value="P:SOS response"/>
    <property type="evidence" value="ECO:0007669"/>
    <property type="project" value="UniProtKB-UniRule"/>
</dbReference>
<dbReference type="CDD" id="cd03242">
    <property type="entry name" value="ABC_RecF"/>
    <property type="match status" value="1"/>
</dbReference>
<dbReference type="Gene3D" id="3.40.50.300">
    <property type="entry name" value="P-loop containing nucleotide triphosphate hydrolases"/>
    <property type="match status" value="1"/>
</dbReference>
<dbReference type="Gene3D" id="1.20.1050.90">
    <property type="entry name" value="RecF/RecN/SMC, N-terminal domain"/>
    <property type="match status" value="1"/>
</dbReference>
<dbReference type="HAMAP" id="MF_00365">
    <property type="entry name" value="RecF"/>
    <property type="match status" value="1"/>
</dbReference>
<dbReference type="InterPro" id="IPR001238">
    <property type="entry name" value="DNA-binding_RecF"/>
</dbReference>
<dbReference type="InterPro" id="IPR018078">
    <property type="entry name" value="DNA-binding_RecF_CS"/>
</dbReference>
<dbReference type="InterPro" id="IPR027417">
    <property type="entry name" value="P-loop_NTPase"/>
</dbReference>
<dbReference type="InterPro" id="IPR003395">
    <property type="entry name" value="RecF/RecN/SMC_N"/>
</dbReference>
<dbReference type="InterPro" id="IPR042174">
    <property type="entry name" value="RecF_2"/>
</dbReference>
<dbReference type="NCBIfam" id="TIGR00611">
    <property type="entry name" value="recf"/>
    <property type="match status" value="1"/>
</dbReference>
<dbReference type="PANTHER" id="PTHR32182">
    <property type="entry name" value="DNA REPLICATION AND REPAIR PROTEIN RECF"/>
    <property type="match status" value="1"/>
</dbReference>
<dbReference type="PANTHER" id="PTHR32182:SF0">
    <property type="entry name" value="DNA REPLICATION AND REPAIR PROTEIN RECF"/>
    <property type="match status" value="1"/>
</dbReference>
<dbReference type="Pfam" id="PF02463">
    <property type="entry name" value="SMC_N"/>
    <property type="match status" value="1"/>
</dbReference>
<dbReference type="SUPFAM" id="SSF52540">
    <property type="entry name" value="P-loop containing nucleoside triphosphate hydrolases"/>
    <property type="match status" value="1"/>
</dbReference>
<dbReference type="PROSITE" id="PS00617">
    <property type="entry name" value="RECF_1"/>
    <property type="match status" value="1"/>
</dbReference>
<dbReference type="PROSITE" id="PS00618">
    <property type="entry name" value="RECF_2"/>
    <property type="match status" value="1"/>
</dbReference>
<accession>Q7U314</accession>
<accession>A0A1R3XU09</accession>
<accession>X2BDR1</accession>
<organism>
    <name type="scientific">Mycobacterium bovis (strain ATCC BAA-935 / AF2122/97)</name>
    <dbReference type="NCBI Taxonomy" id="233413"/>
    <lineage>
        <taxon>Bacteria</taxon>
        <taxon>Bacillati</taxon>
        <taxon>Actinomycetota</taxon>
        <taxon>Actinomycetes</taxon>
        <taxon>Mycobacteriales</taxon>
        <taxon>Mycobacteriaceae</taxon>
        <taxon>Mycobacterium</taxon>
        <taxon>Mycobacterium tuberculosis complex</taxon>
    </lineage>
</organism>
<reference key="1">
    <citation type="journal article" date="2003" name="Proc. Natl. Acad. Sci. U.S.A.">
        <title>The complete genome sequence of Mycobacterium bovis.</title>
        <authorList>
            <person name="Garnier T."/>
            <person name="Eiglmeier K."/>
            <person name="Camus J.-C."/>
            <person name="Medina N."/>
            <person name="Mansoor H."/>
            <person name="Pryor M."/>
            <person name="Duthoy S."/>
            <person name="Grondin S."/>
            <person name="Lacroix C."/>
            <person name="Monsempe C."/>
            <person name="Simon S."/>
            <person name="Harris B."/>
            <person name="Atkin R."/>
            <person name="Doggett J."/>
            <person name="Mayes R."/>
            <person name="Keating L."/>
            <person name="Wheeler P.R."/>
            <person name="Parkhill J."/>
            <person name="Barrell B.G."/>
            <person name="Cole S.T."/>
            <person name="Gordon S.V."/>
            <person name="Hewinson R.G."/>
        </authorList>
    </citation>
    <scope>NUCLEOTIDE SEQUENCE [LARGE SCALE GENOMIC DNA]</scope>
    <source>
        <strain>ATCC BAA-935 / AF2122/97</strain>
    </source>
</reference>
<reference key="2">
    <citation type="journal article" date="2017" name="Genome Announc.">
        <title>Updated reference genome sequence and annotation of Mycobacterium bovis AF2122/97.</title>
        <authorList>
            <person name="Malone K.M."/>
            <person name="Farrell D."/>
            <person name="Stuber T.P."/>
            <person name="Schubert O.T."/>
            <person name="Aebersold R."/>
            <person name="Robbe-Austerman S."/>
            <person name="Gordon S.V."/>
        </authorList>
    </citation>
    <scope>NUCLEOTIDE SEQUENCE [LARGE SCALE GENOMIC DNA]</scope>
    <scope>GENOME REANNOTATION</scope>
    <source>
        <strain>ATCC BAA-935 / AF2122/97</strain>
    </source>
</reference>
<name>RECF_MYCBO</name>
<gene>
    <name evidence="1" type="primary">recF</name>
    <name type="ordered locus">BQ2027_MB0003</name>
</gene>
<evidence type="ECO:0000255" key="1">
    <source>
        <dbReference type="HAMAP-Rule" id="MF_00365"/>
    </source>
</evidence>
<keyword id="KW-0067">ATP-binding</keyword>
<keyword id="KW-0963">Cytoplasm</keyword>
<keyword id="KW-0227">DNA damage</keyword>
<keyword id="KW-0234">DNA repair</keyword>
<keyword id="KW-0235">DNA replication</keyword>
<keyword id="KW-0238">DNA-binding</keyword>
<keyword id="KW-0547">Nucleotide-binding</keyword>
<keyword id="KW-1185">Reference proteome</keyword>
<keyword id="KW-0742">SOS response</keyword>